<sequence length="218" mass="25039">MNWSDILAEEKQKPYFKKILEFLANEALVGKTIFPTKANIFNAFKYTRLDNLKVVILGQDPYHNYNQAHGLAFSVQQGVDIPPSLRNIYKELERSITEFKIPEHGCLINWAKQGVFLLNTTLTVEAHKANSHKDIGWEIFTDAVIQKISNNKPNVVFMLWGSHARKKKNLIDTAKHLVLESSHPSPLSVYRGFDGCDHFVKANQYLTSKDLDIIDWRL</sequence>
<evidence type="ECO:0000255" key="1">
    <source>
        <dbReference type="HAMAP-Rule" id="MF_00148"/>
    </source>
</evidence>
<gene>
    <name evidence="1" type="primary">ung</name>
    <name type="ordered locus">Fphi_1188</name>
</gene>
<keyword id="KW-0963">Cytoplasm</keyword>
<keyword id="KW-0227">DNA damage</keyword>
<keyword id="KW-0234">DNA repair</keyword>
<keyword id="KW-0378">Hydrolase</keyword>
<name>UNG_FRAP2</name>
<protein>
    <recommendedName>
        <fullName evidence="1">Uracil-DNA glycosylase</fullName>
        <shortName evidence="1">UDG</shortName>
        <ecNumber evidence="1">3.2.2.27</ecNumber>
    </recommendedName>
</protein>
<reference key="1">
    <citation type="submission" date="2007-12" db="EMBL/GenBank/DDBJ databases">
        <title>Complete sequence of chromosome of Francisella philomiragia subsp. philomiragia ATCC 25017.</title>
        <authorList>
            <consortium name="US DOE Joint Genome Institute"/>
            <person name="Copeland A."/>
            <person name="Lucas S."/>
            <person name="Lapidus A."/>
            <person name="Barry K."/>
            <person name="Detter J.C."/>
            <person name="Glavina del Rio T."/>
            <person name="Hammon N."/>
            <person name="Israni S."/>
            <person name="Dalin E."/>
            <person name="Tice H."/>
            <person name="Pitluck S."/>
            <person name="Chain P."/>
            <person name="Malfatti S."/>
            <person name="Shin M."/>
            <person name="Vergez L."/>
            <person name="Schmutz J."/>
            <person name="Larimer F."/>
            <person name="Land M."/>
            <person name="Hauser L."/>
            <person name="Richardson P."/>
        </authorList>
    </citation>
    <scope>NUCLEOTIDE SEQUENCE [LARGE SCALE GENOMIC DNA]</scope>
    <source>
        <strain>ATCC 25017 / CCUG 19701 / FSC 153 / O#319-036</strain>
    </source>
</reference>
<organism>
    <name type="scientific">Francisella philomiragia subsp. philomiragia (strain ATCC 25017 / CCUG 19701 / FSC 153 / O#319-036)</name>
    <dbReference type="NCBI Taxonomy" id="484022"/>
    <lineage>
        <taxon>Bacteria</taxon>
        <taxon>Pseudomonadati</taxon>
        <taxon>Pseudomonadota</taxon>
        <taxon>Gammaproteobacteria</taxon>
        <taxon>Thiotrichales</taxon>
        <taxon>Francisellaceae</taxon>
        <taxon>Francisella</taxon>
    </lineage>
</organism>
<feature type="chain" id="PRO_1000076673" description="Uracil-DNA glycosylase">
    <location>
        <begin position="1"/>
        <end position="218"/>
    </location>
</feature>
<feature type="active site" description="Proton acceptor" evidence="1">
    <location>
        <position position="60"/>
    </location>
</feature>
<dbReference type="EC" id="3.2.2.27" evidence="1"/>
<dbReference type="EMBL" id="CP000937">
    <property type="protein sequence ID" value="ABZ87413.1"/>
    <property type="molecule type" value="Genomic_DNA"/>
</dbReference>
<dbReference type="SMR" id="B0TXF5"/>
<dbReference type="KEGG" id="fph:Fphi_1188"/>
<dbReference type="eggNOG" id="COG0692">
    <property type="taxonomic scope" value="Bacteria"/>
</dbReference>
<dbReference type="HOGENOM" id="CLU_032162_3_1_6"/>
<dbReference type="GO" id="GO:0005737">
    <property type="term" value="C:cytoplasm"/>
    <property type="evidence" value="ECO:0007669"/>
    <property type="project" value="UniProtKB-SubCell"/>
</dbReference>
<dbReference type="GO" id="GO:0004844">
    <property type="term" value="F:uracil DNA N-glycosylase activity"/>
    <property type="evidence" value="ECO:0007669"/>
    <property type="project" value="UniProtKB-UniRule"/>
</dbReference>
<dbReference type="GO" id="GO:0097510">
    <property type="term" value="P:base-excision repair, AP site formation via deaminated base removal"/>
    <property type="evidence" value="ECO:0007669"/>
    <property type="project" value="TreeGrafter"/>
</dbReference>
<dbReference type="CDD" id="cd10027">
    <property type="entry name" value="UDG-F1-like"/>
    <property type="match status" value="1"/>
</dbReference>
<dbReference type="FunFam" id="3.40.470.10:FF:000001">
    <property type="entry name" value="Uracil-DNA glycosylase"/>
    <property type="match status" value="1"/>
</dbReference>
<dbReference type="Gene3D" id="3.40.470.10">
    <property type="entry name" value="Uracil-DNA glycosylase-like domain"/>
    <property type="match status" value="1"/>
</dbReference>
<dbReference type="HAMAP" id="MF_00148">
    <property type="entry name" value="UDG"/>
    <property type="match status" value="1"/>
</dbReference>
<dbReference type="InterPro" id="IPR002043">
    <property type="entry name" value="UDG_fam1"/>
</dbReference>
<dbReference type="InterPro" id="IPR018085">
    <property type="entry name" value="Ura-DNA_Glyclase_AS"/>
</dbReference>
<dbReference type="InterPro" id="IPR005122">
    <property type="entry name" value="Uracil-DNA_glycosylase-like"/>
</dbReference>
<dbReference type="InterPro" id="IPR036895">
    <property type="entry name" value="Uracil-DNA_glycosylase-like_sf"/>
</dbReference>
<dbReference type="NCBIfam" id="NF003588">
    <property type="entry name" value="PRK05254.1-1"/>
    <property type="match status" value="1"/>
</dbReference>
<dbReference type="NCBIfam" id="NF003589">
    <property type="entry name" value="PRK05254.1-2"/>
    <property type="match status" value="1"/>
</dbReference>
<dbReference type="NCBIfam" id="NF003591">
    <property type="entry name" value="PRK05254.1-4"/>
    <property type="match status" value="1"/>
</dbReference>
<dbReference type="NCBIfam" id="NF003592">
    <property type="entry name" value="PRK05254.1-5"/>
    <property type="match status" value="1"/>
</dbReference>
<dbReference type="NCBIfam" id="TIGR00628">
    <property type="entry name" value="ung"/>
    <property type="match status" value="1"/>
</dbReference>
<dbReference type="PANTHER" id="PTHR11264">
    <property type="entry name" value="URACIL-DNA GLYCOSYLASE"/>
    <property type="match status" value="1"/>
</dbReference>
<dbReference type="PANTHER" id="PTHR11264:SF0">
    <property type="entry name" value="URACIL-DNA GLYCOSYLASE"/>
    <property type="match status" value="1"/>
</dbReference>
<dbReference type="Pfam" id="PF03167">
    <property type="entry name" value="UDG"/>
    <property type="match status" value="1"/>
</dbReference>
<dbReference type="SMART" id="SM00986">
    <property type="entry name" value="UDG"/>
    <property type="match status" value="1"/>
</dbReference>
<dbReference type="SMART" id="SM00987">
    <property type="entry name" value="UreE_C"/>
    <property type="match status" value="1"/>
</dbReference>
<dbReference type="SUPFAM" id="SSF52141">
    <property type="entry name" value="Uracil-DNA glycosylase-like"/>
    <property type="match status" value="1"/>
</dbReference>
<dbReference type="PROSITE" id="PS00130">
    <property type="entry name" value="U_DNA_GLYCOSYLASE"/>
    <property type="match status" value="1"/>
</dbReference>
<proteinExistence type="inferred from homology"/>
<accession>B0TXF5</accession>
<comment type="function">
    <text evidence="1">Excises uracil residues from the DNA which can arise as a result of misincorporation of dUMP residues by DNA polymerase or due to deamination of cytosine.</text>
</comment>
<comment type="catalytic activity">
    <reaction evidence="1">
        <text>Hydrolyzes single-stranded DNA or mismatched double-stranded DNA and polynucleotides, releasing free uracil.</text>
        <dbReference type="EC" id="3.2.2.27"/>
    </reaction>
</comment>
<comment type="subcellular location">
    <subcellularLocation>
        <location evidence="1">Cytoplasm</location>
    </subcellularLocation>
</comment>
<comment type="similarity">
    <text evidence="1">Belongs to the uracil-DNA glycosylase (UDG) superfamily. UNG family.</text>
</comment>